<gene>
    <name type="primary">yxeC</name>
    <name type="ordered locus">BSU39600</name>
    <name type="ORF">HS74C</name>
</gene>
<evidence type="ECO:0000255" key="1"/>
<evidence type="ECO:0000305" key="2"/>
<feature type="chain" id="PRO_0000050012" description="Uncharacterized protein YxeC">
    <location>
        <begin position="1"/>
        <end position="132"/>
    </location>
</feature>
<feature type="transmembrane region" description="Helical" evidence="1">
    <location>
        <begin position="18"/>
        <end position="38"/>
    </location>
</feature>
<feature type="transmembrane region" description="Helical" evidence="1">
    <location>
        <begin position="50"/>
        <end position="70"/>
    </location>
</feature>
<feature type="transmembrane region" description="Helical" evidence="1">
    <location>
        <begin position="71"/>
        <end position="91"/>
    </location>
</feature>
<feature type="sequence conflict" description="In Ref. 1; BAA08319." evidence="2" ref="1">
    <original>A</original>
    <variation>P</variation>
    <location>
        <position position="57"/>
    </location>
</feature>
<organism>
    <name type="scientific">Bacillus subtilis (strain 168)</name>
    <dbReference type="NCBI Taxonomy" id="224308"/>
    <lineage>
        <taxon>Bacteria</taxon>
        <taxon>Bacillati</taxon>
        <taxon>Bacillota</taxon>
        <taxon>Bacilli</taxon>
        <taxon>Bacillales</taxon>
        <taxon>Bacillaceae</taxon>
        <taxon>Bacillus</taxon>
    </lineage>
</organism>
<name>YXEC_BACSU</name>
<protein>
    <recommendedName>
        <fullName>Uncharacterized protein YxeC</fullName>
    </recommendedName>
</protein>
<comment type="subcellular location">
    <subcellularLocation>
        <location evidence="2">Cell membrane</location>
        <topology evidence="2">Multi-pass membrane protein</topology>
    </subcellularLocation>
</comment>
<dbReference type="EMBL" id="D45912">
    <property type="protein sequence ID" value="BAA08319.1"/>
    <property type="molecule type" value="Genomic_DNA"/>
</dbReference>
<dbReference type="EMBL" id="AL009126">
    <property type="protein sequence ID" value="CAB15996.2"/>
    <property type="molecule type" value="Genomic_DNA"/>
</dbReference>
<dbReference type="PIR" id="E70074">
    <property type="entry name" value="E70074"/>
</dbReference>
<dbReference type="RefSeq" id="NP_391839.2">
    <property type="nucleotide sequence ID" value="NC_000964.3"/>
</dbReference>
<dbReference type="RefSeq" id="WP_003243293.1">
    <property type="nucleotide sequence ID" value="NZ_OZ025638.1"/>
</dbReference>
<dbReference type="FunCoup" id="P54942">
    <property type="interactions" value="154"/>
</dbReference>
<dbReference type="STRING" id="224308.BSU39600"/>
<dbReference type="PaxDb" id="224308-BSU39600"/>
<dbReference type="EnsemblBacteria" id="CAB15996">
    <property type="protein sequence ID" value="CAB15996"/>
    <property type="gene ID" value="BSU_39600"/>
</dbReference>
<dbReference type="GeneID" id="937578"/>
<dbReference type="KEGG" id="bsu:BSU39600"/>
<dbReference type="PATRIC" id="fig|224308.179.peg.4285"/>
<dbReference type="eggNOG" id="ENOG502ZJM0">
    <property type="taxonomic scope" value="Bacteria"/>
</dbReference>
<dbReference type="InParanoid" id="P54942"/>
<dbReference type="OrthoDB" id="1929550at2"/>
<dbReference type="BioCyc" id="BSUB:BSU39600-MONOMER"/>
<dbReference type="PRO" id="PR:P54942"/>
<dbReference type="Proteomes" id="UP000001570">
    <property type="component" value="Chromosome"/>
</dbReference>
<dbReference type="GO" id="GO:0005886">
    <property type="term" value="C:plasma membrane"/>
    <property type="evidence" value="ECO:0007669"/>
    <property type="project" value="UniProtKB-SubCell"/>
</dbReference>
<accession>P54942</accession>
<sequence>MGITKRGAAWEWLHSWWMLFIFMPFAITSFFAFLFIGIKVRNRKWIMYGIIYFFIFAFGFVLPDLPGVFIVVPLWAVTIIHGFKVRPLYLIQLDVYKDHVEARAFAEARSEAESRFHAPKQSIQDIHIRKEQ</sequence>
<keyword id="KW-1003">Cell membrane</keyword>
<keyword id="KW-0472">Membrane</keyword>
<keyword id="KW-1185">Reference proteome</keyword>
<keyword id="KW-0812">Transmembrane</keyword>
<keyword id="KW-1133">Transmembrane helix</keyword>
<proteinExistence type="predicted"/>
<reference key="1">
    <citation type="journal article" date="1995" name="DNA Res.">
        <title>Cloning and sequencing of a 23-kb region of the Bacillus subtilis genome between the iol and hut operons.</title>
        <authorList>
            <person name="Yoshida K."/>
            <person name="Fujimyra M."/>
            <person name="Yanai N."/>
            <person name="Fujita Y."/>
        </authorList>
    </citation>
    <scope>NUCLEOTIDE SEQUENCE [GENOMIC DNA]</scope>
    <source>
        <strain>168 / BGSC1A1</strain>
    </source>
</reference>
<reference key="2">
    <citation type="journal article" date="1997" name="Nature">
        <title>The complete genome sequence of the Gram-positive bacterium Bacillus subtilis.</title>
        <authorList>
            <person name="Kunst F."/>
            <person name="Ogasawara N."/>
            <person name="Moszer I."/>
            <person name="Albertini A.M."/>
            <person name="Alloni G."/>
            <person name="Azevedo V."/>
            <person name="Bertero M.G."/>
            <person name="Bessieres P."/>
            <person name="Bolotin A."/>
            <person name="Borchert S."/>
            <person name="Borriss R."/>
            <person name="Boursier L."/>
            <person name="Brans A."/>
            <person name="Braun M."/>
            <person name="Brignell S.C."/>
            <person name="Bron S."/>
            <person name="Brouillet S."/>
            <person name="Bruschi C.V."/>
            <person name="Caldwell B."/>
            <person name="Capuano V."/>
            <person name="Carter N.M."/>
            <person name="Choi S.-K."/>
            <person name="Codani J.-J."/>
            <person name="Connerton I.F."/>
            <person name="Cummings N.J."/>
            <person name="Daniel R.A."/>
            <person name="Denizot F."/>
            <person name="Devine K.M."/>
            <person name="Duesterhoeft A."/>
            <person name="Ehrlich S.D."/>
            <person name="Emmerson P.T."/>
            <person name="Entian K.-D."/>
            <person name="Errington J."/>
            <person name="Fabret C."/>
            <person name="Ferrari E."/>
            <person name="Foulger D."/>
            <person name="Fritz C."/>
            <person name="Fujita M."/>
            <person name="Fujita Y."/>
            <person name="Fuma S."/>
            <person name="Galizzi A."/>
            <person name="Galleron N."/>
            <person name="Ghim S.-Y."/>
            <person name="Glaser P."/>
            <person name="Goffeau A."/>
            <person name="Golightly E.J."/>
            <person name="Grandi G."/>
            <person name="Guiseppi G."/>
            <person name="Guy B.J."/>
            <person name="Haga K."/>
            <person name="Haiech J."/>
            <person name="Harwood C.R."/>
            <person name="Henaut A."/>
            <person name="Hilbert H."/>
            <person name="Holsappel S."/>
            <person name="Hosono S."/>
            <person name="Hullo M.-F."/>
            <person name="Itaya M."/>
            <person name="Jones L.-M."/>
            <person name="Joris B."/>
            <person name="Karamata D."/>
            <person name="Kasahara Y."/>
            <person name="Klaerr-Blanchard M."/>
            <person name="Klein C."/>
            <person name="Kobayashi Y."/>
            <person name="Koetter P."/>
            <person name="Koningstein G."/>
            <person name="Krogh S."/>
            <person name="Kumano M."/>
            <person name="Kurita K."/>
            <person name="Lapidus A."/>
            <person name="Lardinois S."/>
            <person name="Lauber J."/>
            <person name="Lazarevic V."/>
            <person name="Lee S.-M."/>
            <person name="Levine A."/>
            <person name="Liu H."/>
            <person name="Masuda S."/>
            <person name="Mauel C."/>
            <person name="Medigue C."/>
            <person name="Medina N."/>
            <person name="Mellado R.P."/>
            <person name="Mizuno M."/>
            <person name="Moestl D."/>
            <person name="Nakai S."/>
            <person name="Noback M."/>
            <person name="Noone D."/>
            <person name="O'Reilly M."/>
            <person name="Ogawa K."/>
            <person name="Ogiwara A."/>
            <person name="Oudega B."/>
            <person name="Park S.-H."/>
            <person name="Parro V."/>
            <person name="Pohl T.M."/>
            <person name="Portetelle D."/>
            <person name="Porwollik S."/>
            <person name="Prescott A.M."/>
            <person name="Presecan E."/>
            <person name="Pujic P."/>
            <person name="Purnelle B."/>
            <person name="Rapoport G."/>
            <person name="Rey M."/>
            <person name="Reynolds S."/>
            <person name="Rieger M."/>
            <person name="Rivolta C."/>
            <person name="Rocha E."/>
            <person name="Roche B."/>
            <person name="Rose M."/>
            <person name="Sadaie Y."/>
            <person name="Sato T."/>
            <person name="Scanlan E."/>
            <person name="Schleich S."/>
            <person name="Schroeter R."/>
            <person name="Scoffone F."/>
            <person name="Sekiguchi J."/>
            <person name="Sekowska A."/>
            <person name="Seror S.J."/>
            <person name="Serror P."/>
            <person name="Shin B.-S."/>
            <person name="Soldo B."/>
            <person name="Sorokin A."/>
            <person name="Tacconi E."/>
            <person name="Takagi T."/>
            <person name="Takahashi H."/>
            <person name="Takemaru K."/>
            <person name="Takeuchi M."/>
            <person name="Tamakoshi A."/>
            <person name="Tanaka T."/>
            <person name="Terpstra P."/>
            <person name="Tognoni A."/>
            <person name="Tosato V."/>
            <person name="Uchiyama S."/>
            <person name="Vandenbol M."/>
            <person name="Vannier F."/>
            <person name="Vassarotti A."/>
            <person name="Viari A."/>
            <person name="Wambutt R."/>
            <person name="Wedler E."/>
            <person name="Wedler H."/>
            <person name="Weitzenegger T."/>
            <person name="Winters P."/>
            <person name="Wipat A."/>
            <person name="Yamamoto H."/>
            <person name="Yamane K."/>
            <person name="Yasumoto K."/>
            <person name="Yata K."/>
            <person name="Yoshida K."/>
            <person name="Yoshikawa H.-F."/>
            <person name="Zumstein E."/>
            <person name="Yoshikawa H."/>
            <person name="Danchin A."/>
        </authorList>
    </citation>
    <scope>NUCLEOTIDE SEQUENCE [LARGE SCALE GENOMIC DNA]</scope>
    <source>
        <strain>168</strain>
    </source>
</reference>
<reference key="3">
    <citation type="journal article" date="2009" name="Microbiology">
        <title>From a consortium sequence to a unified sequence: the Bacillus subtilis 168 reference genome a decade later.</title>
        <authorList>
            <person name="Barbe V."/>
            <person name="Cruveiller S."/>
            <person name="Kunst F."/>
            <person name="Lenoble P."/>
            <person name="Meurice G."/>
            <person name="Sekowska A."/>
            <person name="Vallenet D."/>
            <person name="Wang T."/>
            <person name="Moszer I."/>
            <person name="Medigue C."/>
            <person name="Danchin A."/>
        </authorList>
    </citation>
    <scope>SEQUENCE REVISION TO 57</scope>
</reference>